<dbReference type="EC" id="3.1.-.-"/>
<dbReference type="EMBL" id="X99960">
    <property type="protein sequence ID" value="CAA68218.1"/>
    <property type="molecule type" value="Genomic_DNA"/>
</dbReference>
<dbReference type="EMBL" id="Z72666">
    <property type="protein sequence ID" value="CAA96856.1"/>
    <property type="molecule type" value="Genomic_DNA"/>
</dbReference>
<dbReference type="EMBL" id="AY723812">
    <property type="protein sequence ID" value="AAU09729.1"/>
    <property type="molecule type" value="Genomic_DNA"/>
</dbReference>
<dbReference type="EMBL" id="BK006941">
    <property type="protein sequence ID" value="DAA07966.1"/>
    <property type="molecule type" value="Genomic_DNA"/>
</dbReference>
<dbReference type="PIR" id="S64158">
    <property type="entry name" value="S64158"/>
</dbReference>
<dbReference type="RefSeq" id="NP_011371.1">
    <property type="nucleotide sequence ID" value="NM_001181009.1"/>
</dbReference>
<dbReference type="BioGRID" id="33108">
    <property type="interactions" value="75"/>
</dbReference>
<dbReference type="FunCoup" id="P53118">
    <property type="interactions" value="46"/>
</dbReference>
<dbReference type="IntAct" id="P53118">
    <property type="interactions" value="3"/>
</dbReference>
<dbReference type="MINT" id="P53118"/>
<dbReference type="STRING" id="4932.YGL144C"/>
<dbReference type="ESTHER" id="yeast-ROG1">
    <property type="family name" value="Duf_676"/>
</dbReference>
<dbReference type="iPTMnet" id="P53118"/>
<dbReference type="PaxDb" id="4932-YGL144C"/>
<dbReference type="PeptideAtlas" id="P53118"/>
<dbReference type="EnsemblFungi" id="YGL144C_mRNA">
    <property type="protein sequence ID" value="YGL144C"/>
    <property type="gene ID" value="YGL144C"/>
</dbReference>
<dbReference type="GeneID" id="852733"/>
<dbReference type="KEGG" id="sce:YGL144C"/>
<dbReference type="AGR" id="SGD:S000003112"/>
<dbReference type="SGD" id="S000003112">
    <property type="gene designation" value="ROG1"/>
</dbReference>
<dbReference type="VEuPathDB" id="FungiDB:YGL144C"/>
<dbReference type="eggNOG" id="KOG4372">
    <property type="taxonomic scope" value="Eukaryota"/>
</dbReference>
<dbReference type="GeneTree" id="ENSGT00940000176402"/>
<dbReference type="HOGENOM" id="CLU_007367_1_0_1"/>
<dbReference type="InParanoid" id="P53118"/>
<dbReference type="OMA" id="TIARRWH"/>
<dbReference type="OrthoDB" id="5368485at2759"/>
<dbReference type="BioCyc" id="YEAST:G3O-30638-MONOMER"/>
<dbReference type="BioGRID-ORCS" id="852733">
    <property type="hits" value="0 hits in 10 CRISPR screens"/>
</dbReference>
<dbReference type="PRO" id="PR:P53118"/>
<dbReference type="Proteomes" id="UP000002311">
    <property type="component" value="Chromosome VII"/>
</dbReference>
<dbReference type="RNAct" id="P53118">
    <property type="molecule type" value="protein"/>
</dbReference>
<dbReference type="GO" id="GO:0005737">
    <property type="term" value="C:cytoplasm"/>
    <property type="evidence" value="ECO:0000314"/>
    <property type="project" value="SGD"/>
</dbReference>
<dbReference type="GO" id="GO:0005634">
    <property type="term" value="C:nucleus"/>
    <property type="evidence" value="ECO:0000314"/>
    <property type="project" value="SGD"/>
</dbReference>
<dbReference type="GO" id="GO:0047372">
    <property type="term" value="F:monoacylglycerol lipase activity"/>
    <property type="evidence" value="ECO:0000314"/>
    <property type="project" value="SGD"/>
</dbReference>
<dbReference type="GO" id="GO:0016042">
    <property type="term" value="P:lipid catabolic process"/>
    <property type="evidence" value="ECO:0007669"/>
    <property type="project" value="UniProtKB-KW"/>
</dbReference>
<dbReference type="GO" id="GO:0006629">
    <property type="term" value="P:lipid metabolic process"/>
    <property type="evidence" value="ECO:0000315"/>
    <property type="project" value="SGD"/>
</dbReference>
<dbReference type="Gene3D" id="3.40.50.1820">
    <property type="entry name" value="alpha/beta hydrolase"/>
    <property type="match status" value="1"/>
</dbReference>
<dbReference type="InterPro" id="IPR029058">
    <property type="entry name" value="AB_hydrolase_fold"/>
</dbReference>
<dbReference type="InterPro" id="IPR007751">
    <property type="entry name" value="DUF676_lipase-like"/>
</dbReference>
<dbReference type="InterPro" id="IPR044294">
    <property type="entry name" value="Lipase-like"/>
</dbReference>
<dbReference type="InterPro" id="IPR016445">
    <property type="entry name" value="Rog1_fam"/>
</dbReference>
<dbReference type="PANTHER" id="PTHR12482:SF62">
    <property type="entry name" value="LIPASE ROG1-RELATED"/>
    <property type="match status" value="1"/>
</dbReference>
<dbReference type="PANTHER" id="PTHR12482">
    <property type="entry name" value="LIPASE ROG1-RELATED-RELATED"/>
    <property type="match status" value="1"/>
</dbReference>
<dbReference type="Pfam" id="PF05057">
    <property type="entry name" value="DUF676"/>
    <property type="match status" value="1"/>
</dbReference>
<dbReference type="PIRSF" id="PIRSF005412">
    <property type="entry name" value="UCP005412_abhydr"/>
    <property type="match status" value="1"/>
</dbReference>
<dbReference type="SUPFAM" id="SSF53474">
    <property type="entry name" value="alpha/beta-Hydrolases"/>
    <property type="match status" value="1"/>
</dbReference>
<dbReference type="PROSITE" id="PS00120">
    <property type="entry name" value="LIPASE_SER"/>
    <property type="match status" value="1"/>
</dbReference>
<organism>
    <name type="scientific">Saccharomyces cerevisiae (strain ATCC 204508 / S288c)</name>
    <name type="common">Baker's yeast</name>
    <dbReference type="NCBI Taxonomy" id="559292"/>
    <lineage>
        <taxon>Eukaryota</taxon>
        <taxon>Fungi</taxon>
        <taxon>Dikarya</taxon>
        <taxon>Ascomycota</taxon>
        <taxon>Saccharomycotina</taxon>
        <taxon>Saccharomycetes</taxon>
        <taxon>Saccharomycetales</taxon>
        <taxon>Saccharomycetaceae</taxon>
        <taxon>Saccharomyces</taxon>
    </lineage>
</organism>
<feature type="chain" id="PRO_0000202735" description="Putative lipase ROG1">
    <location>
        <begin position="1"/>
        <end position="685"/>
    </location>
</feature>
<feature type="active site" description="Charge relay system" evidence="1">
    <location>
        <position position="269"/>
    </location>
</feature>
<feature type="sequence conflict" description="In Ref. 4; AAU09729." evidence="2" ref="4">
    <original>F</original>
    <variation>S</variation>
    <location>
        <position position="514"/>
    </location>
</feature>
<keyword id="KW-0378">Hydrolase</keyword>
<keyword id="KW-0442">Lipid degradation</keyword>
<keyword id="KW-0443">Lipid metabolism</keyword>
<keyword id="KW-1185">Reference proteome</keyword>
<reference key="1">
    <citation type="journal article" date="1997" name="Yeast">
        <title>The sequence of a nearly unclonable 22.8 kb segment on the left arm chromosome VII from Saccharomyces cerevisiae reveals ARO2, RPL9A, TIP1, MRF1 genes and six new open reading frames.</title>
        <authorList>
            <person name="Voet M."/>
            <person name="Defoor E."/>
            <person name="Verhasselt P."/>
            <person name="Riles L."/>
            <person name="Robben J."/>
            <person name="Volckaert G."/>
        </authorList>
    </citation>
    <scope>NUCLEOTIDE SEQUENCE [GENOMIC DNA]</scope>
    <source>
        <strain>ATCC 96604 / S288c / FY1679</strain>
    </source>
</reference>
<reference key="2">
    <citation type="journal article" date="1997" name="Nature">
        <title>The nucleotide sequence of Saccharomyces cerevisiae chromosome VII.</title>
        <authorList>
            <person name="Tettelin H."/>
            <person name="Agostoni-Carbone M.L."/>
            <person name="Albermann K."/>
            <person name="Albers M."/>
            <person name="Arroyo J."/>
            <person name="Backes U."/>
            <person name="Barreiros T."/>
            <person name="Bertani I."/>
            <person name="Bjourson A.J."/>
            <person name="Brueckner M."/>
            <person name="Bruschi C.V."/>
            <person name="Carignani G."/>
            <person name="Castagnoli L."/>
            <person name="Cerdan E."/>
            <person name="Clemente M.L."/>
            <person name="Coblenz A."/>
            <person name="Coglievina M."/>
            <person name="Coissac E."/>
            <person name="Defoor E."/>
            <person name="Del Bino S."/>
            <person name="Delius H."/>
            <person name="Delneri D."/>
            <person name="de Wergifosse P."/>
            <person name="Dujon B."/>
            <person name="Durand P."/>
            <person name="Entian K.-D."/>
            <person name="Eraso P."/>
            <person name="Escribano V."/>
            <person name="Fabiani L."/>
            <person name="Fartmann B."/>
            <person name="Feroli F."/>
            <person name="Feuermann M."/>
            <person name="Frontali L."/>
            <person name="Garcia-Gonzalez M."/>
            <person name="Garcia-Saez M.I."/>
            <person name="Goffeau A."/>
            <person name="Guerreiro P."/>
            <person name="Hani J."/>
            <person name="Hansen M."/>
            <person name="Hebling U."/>
            <person name="Hernandez K."/>
            <person name="Heumann K."/>
            <person name="Hilger F."/>
            <person name="Hofmann B."/>
            <person name="Indge K.J."/>
            <person name="James C.M."/>
            <person name="Klima R."/>
            <person name="Koetter P."/>
            <person name="Kramer B."/>
            <person name="Kramer W."/>
            <person name="Lauquin G."/>
            <person name="Leuther H."/>
            <person name="Louis E.J."/>
            <person name="Maillier E."/>
            <person name="Marconi A."/>
            <person name="Martegani E."/>
            <person name="Mazon M.J."/>
            <person name="Mazzoni C."/>
            <person name="McReynolds A.D.K."/>
            <person name="Melchioretto P."/>
            <person name="Mewes H.-W."/>
            <person name="Minenkova O."/>
            <person name="Mueller-Auer S."/>
            <person name="Nawrocki A."/>
            <person name="Netter P."/>
            <person name="Neu R."/>
            <person name="Nombela C."/>
            <person name="Oliver S.G."/>
            <person name="Panzeri L."/>
            <person name="Paoluzi S."/>
            <person name="Plevani P."/>
            <person name="Portetelle D."/>
            <person name="Portillo F."/>
            <person name="Potier S."/>
            <person name="Purnelle B."/>
            <person name="Rieger M."/>
            <person name="Riles L."/>
            <person name="Rinaldi T."/>
            <person name="Robben J."/>
            <person name="Rodrigues-Pousada C."/>
            <person name="Rodriguez-Belmonte E."/>
            <person name="Rodriguez-Torres A.M."/>
            <person name="Rose M."/>
            <person name="Ruzzi M."/>
            <person name="Saliola M."/>
            <person name="Sanchez-Perez M."/>
            <person name="Schaefer B."/>
            <person name="Schaefer M."/>
            <person name="Scharfe M."/>
            <person name="Schmidheini T."/>
            <person name="Schreer A."/>
            <person name="Skala J."/>
            <person name="Souciet J.-L."/>
            <person name="Steensma H.Y."/>
            <person name="Talla E."/>
            <person name="Thierry A."/>
            <person name="Vandenbol M."/>
            <person name="van der Aart Q.J.M."/>
            <person name="Van Dyck L."/>
            <person name="Vanoni M."/>
            <person name="Verhasselt P."/>
            <person name="Voet M."/>
            <person name="Volckaert G."/>
            <person name="Wambutt R."/>
            <person name="Watson M.D."/>
            <person name="Weber N."/>
            <person name="Wedler E."/>
            <person name="Wedler H."/>
            <person name="Wipfli P."/>
            <person name="Wolf K."/>
            <person name="Wright L.F."/>
            <person name="Zaccaria P."/>
            <person name="Zimmermann M."/>
            <person name="Zollner A."/>
            <person name="Kleine K."/>
        </authorList>
    </citation>
    <scope>NUCLEOTIDE SEQUENCE [LARGE SCALE GENOMIC DNA]</scope>
    <source>
        <strain>ATCC 204508 / S288c</strain>
    </source>
</reference>
<reference key="3">
    <citation type="journal article" date="2014" name="G3 (Bethesda)">
        <title>The reference genome sequence of Saccharomyces cerevisiae: Then and now.</title>
        <authorList>
            <person name="Engel S.R."/>
            <person name="Dietrich F.S."/>
            <person name="Fisk D.G."/>
            <person name="Binkley G."/>
            <person name="Balakrishnan R."/>
            <person name="Costanzo M.C."/>
            <person name="Dwight S.S."/>
            <person name="Hitz B.C."/>
            <person name="Karra K."/>
            <person name="Nash R.S."/>
            <person name="Weng S."/>
            <person name="Wong E.D."/>
            <person name="Lloyd P."/>
            <person name="Skrzypek M.S."/>
            <person name="Miyasato S.R."/>
            <person name="Simison M."/>
            <person name="Cherry J.M."/>
        </authorList>
    </citation>
    <scope>GENOME REANNOTATION</scope>
    <source>
        <strain>ATCC 204508 / S288c</strain>
    </source>
</reference>
<reference key="4">
    <citation type="journal article" date="2007" name="Genome Res.">
        <title>Approaching a complete repository of sequence-verified protein-encoding clones for Saccharomyces cerevisiae.</title>
        <authorList>
            <person name="Hu Y."/>
            <person name="Rolfs A."/>
            <person name="Bhullar B."/>
            <person name="Murthy T.V.S."/>
            <person name="Zhu C."/>
            <person name="Berger M.F."/>
            <person name="Camargo A.A."/>
            <person name="Kelley F."/>
            <person name="McCarron S."/>
            <person name="Jepson D."/>
            <person name="Richardson A."/>
            <person name="Raphael J."/>
            <person name="Moreira D."/>
            <person name="Taycher E."/>
            <person name="Zuo D."/>
            <person name="Mohr S."/>
            <person name="Kane M.F."/>
            <person name="Williamson J."/>
            <person name="Simpson A.J.G."/>
            <person name="Bulyk M.L."/>
            <person name="Harlow E."/>
            <person name="Marsischky G."/>
            <person name="Kolodner R.D."/>
            <person name="LaBaer J."/>
        </authorList>
    </citation>
    <scope>NUCLEOTIDE SEQUENCE [GENOMIC DNA]</scope>
    <source>
        <strain>ATCC 204508 / S288c</strain>
    </source>
</reference>
<gene>
    <name type="primary">ROG1</name>
    <name type="ordered locus">YGL144C</name>
</gene>
<evidence type="ECO:0000255" key="1">
    <source>
        <dbReference type="PROSITE-ProRule" id="PRU10037"/>
    </source>
</evidence>
<evidence type="ECO:0000305" key="2"/>
<accession>P53118</accession>
<accession>D6VU05</accession>
<accession>Q66RA3</accession>
<protein>
    <recommendedName>
        <fullName>Putative lipase ROG1</fullName>
        <ecNumber>3.1.-.-</ecNumber>
    </recommendedName>
    <alternativeName>
        <fullName>Revertant of glycogen synthase kinase mutation protein 1</fullName>
    </alternativeName>
</protein>
<comment type="interaction">
    <interactant intactId="EBI-24005">
        <id>P53118</id>
    </interactant>
    <interactant intactId="EBI-22980">
        <id>P43603</id>
        <label>LSB3</label>
    </interactant>
    <organismsDiffer>false</organismsDiffer>
    <experiments>2</experiments>
</comment>
<comment type="similarity">
    <text evidence="2">Belongs to the putative lipase ROG1 family.</text>
</comment>
<name>ROG1_YEAST</name>
<sequence>MSLTPTNEILFHYKSSVKVGELERYVITYHLYDGEEIPPDLNLNSLWLKVRNMNPLSYRAAYLMGPFMLYCDVKTAQYHHSQKIVASVDYPKFEPNVQTQQDFVAELSVHNIRQKYVWIADVMSQILFTTNTNVTYEVTIGTSKESVENPHDLPSHLGSYSPKLTVNRLTTLDLWNLPVQITTPQKKKHLVVLTHGLHSNVSTDLVYIMEQIYKAQKNYPHEQIVVKGYRGNVCQTEKGVKYLGTRLAEYIIQDLYDESIRKISFVGHSLGGLIQAFAIAYIYEVYPWFFKKVNPINFITLASPLLGIVTDNPAYIKVLLSFGVIGKTGQDLGLENDVEVGKPLLYLLSGLPLIEILRRFKRRTVYANAINDGIVPLYTASLLFLDYNDILEQLQKLKENSKKSPLINDASTPVNQDFFNKTFISPLTKMLSILAPQKFPTENGSEIPKVSFFESASSILLPPLPERAYIMDPDSRDPVIIHDKIYNEDDIPQSEFDIEDGFFGKKNILLQAFFAGKKERAKYRNLEETIARRWHEGMAWRKVVVALKPDAHNNIIVRRKFANAYGWPVIDHLIDVHFNGDDDDDNDENDDINSTQVVEPIQSVTEGKKKYRKAENIPQEYGWLNKVETNGVFDEGPTGMISTVGEIVEALAKRGFSAVIDRRNASEDPNDEVLRFEEMNSDLVQ</sequence>
<proteinExistence type="evidence at protein level"/>